<evidence type="ECO:0000250" key="1"/>
<evidence type="ECO:0000305" key="2"/>
<proteinExistence type="inferred from homology"/>
<accession>P9WNC2</accession>
<accession>L0TDY9</accession>
<accession>P64150</accession>
<accession>Q10959</accession>
<reference key="1">
    <citation type="journal article" date="2002" name="J. Bacteriol.">
        <title>Whole-genome comparison of Mycobacterium tuberculosis clinical and laboratory strains.</title>
        <authorList>
            <person name="Fleischmann R.D."/>
            <person name="Alland D."/>
            <person name="Eisen J.A."/>
            <person name="Carpenter L."/>
            <person name="White O."/>
            <person name="Peterson J.D."/>
            <person name="DeBoy R.T."/>
            <person name="Dodson R.J."/>
            <person name="Gwinn M.L."/>
            <person name="Haft D.H."/>
            <person name="Hickey E.K."/>
            <person name="Kolonay J.F."/>
            <person name="Nelson W.C."/>
            <person name="Umayam L.A."/>
            <person name="Ermolaeva M.D."/>
            <person name="Salzberg S.L."/>
            <person name="Delcher A."/>
            <person name="Utterback T.R."/>
            <person name="Weidman J.F."/>
            <person name="Khouri H.M."/>
            <person name="Gill J."/>
            <person name="Mikula A."/>
            <person name="Bishai W."/>
            <person name="Jacobs W.R. Jr."/>
            <person name="Venter J.C."/>
            <person name="Fraser C.M."/>
        </authorList>
    </citation>
    <scope>NUCLEOTIDE SEQUENCE [LARGE SCALE GENOMIC DNA]</scope>
    <source>
        <strain>CDC 1551 / Oshkosh</strain>
    </source>
</reference>
<comment type="function">
    <text evidence="1">Involved in base excision repair of DNA damaged by oxidation or by mutagenic agents. Acts as a DNA glycosylase that recognizes and removes damaged bases. Has a preference for oxidized purines, such as 7,8-dihydro-8-oxoguanine (8-oxoG). Has AP (apurinic/apyrimidinic) lyase activity and introduces nicks in the DNA strand. Cleaves the DNA backbone by beta-delta elimination to generate a single-strand break at the site of the removed base with both 3'- and 5'-phosphates (By similarity).</text>
</comment>
<comment type="catalytic activity">
    <reaction>
        <text>Hydrolysis of DNA containing ring-opened 7-methylguanine residues, releasing 2,6-diamino-4-hydroxy-5-(N-methyl)formamidopyrimidine.</text>
        <dbReference type="EC" id="3.2.2.23"/>
    </reaction>
</comment>
<comment type="catalytic activity">
    <reaction>
        <text>2'-deoxyribonucleotide-(2'-deoxyribose 5'-phosphate)-2'-deoxyribonucleotide-DNA = a 3'-end 2'-deoxyribonucleotide-(2,3-dehydro-2,3-deoxyribose 5'-phosphate)-DNA + a 5'-end 5'-phospho-2'-deoxyribonucleoside-DNA + H(+)</text>
        <dbReference type="Rhea" id="RHEA:66592"/>
        <dbReference type="Rhea" id="RHEA-COMP:13180"/>
        <dbReference type="Rhea" id="RHEA-COMP:16897"/>
        <dbReference type="Rhea" id="RHEA-COMP:17067"/>
        <dbReference type="ChEBI" id="CHEBI:15378"/>
        <dbReference type="ChEBI" id="CHEBI:136412"/>
        <dbReference type="ChEBI" id="CHEBI:157695"/>
        <dbReference type="ChEBI" id="CHEBI:167181"/>
        <dbReference type="EC" id="4.2.99.18"/>
    </reaction>
</comment>
<comment type="cofactor">
    <cofactor evidence="1">
        <name>Zn(2+)</name>
        <dbReference type="ChEBI" id="CHEBI:29105"/>
    </cofactor>
    <text evidence="1">Binds 1 zinc ion per subunit.</text>
</comment>
<comment type="subunit">
    <text evidence="1">Monomer.</text>
</comment>
<comment type="similarity">
    <text evidence="2">Belongs to the FPG family.</text>
</comment>
<keyword id="KW-0227">DNA damage</keyword>
<keyword id="KW-0234">DNA repair</keyword>
<keyword id="KW-0238">DNA-binding</keyword>
<keyword id="KW-0326">Glycosidase</keyword>
<keyword id="KW-0378">Hydrolase</keyword>
<keyword id="KW-0456">Lyase</keyword>
<keyword id="KW-0479">Metal-binding</keyword>
<keyword id="KW-0511">Multifunctional enzyme</keyword>
<keyword id="KW-1185">Reference proteome</keyword>
<keyword id="KW-0862">Zinc</keyword>
<keyword id="KW-0863">Zinc-finger</keyword>
<name>FPG1_MYCTO</name>
<sequence length="289" mass="31951">MPELPEVEVVRRGLQAHVTGRTITEVRVHHPRAVRRHDAGPADLTARLRGARINGTDRRGKYLWLTLNTAGVHRPTDTALVVHLGMSGQMLLGAVPCAAHVRISALLDDGTVLSFADQRTFGGWLLADLVTVDGSVVPVPVAHLARDPLDPRFDCDAVVKVLRRKHSELKRQLLDQRVVSGIGNIYADEALWRAKVNGAHVAATLRCRRLGAVLHAAADVMREALAKGGTSFDSLYVNVNGESGYFERSLDAYGREGENCRRCGAVIRRERFMNRSSFYCPRCQPRPRK</sequence>
<gene>
    <name type="primary">fpg1</name>
    <name type="synonym">mutM</name>
    <name type="ordered locus">MT2994</name>
</gene>
<dbReference type="EC" id="3.2.2.23"/>
<dbReference type="EC" id="4.2.99.18"/>
<dbReference type="EMBL" id="AE000516">
    <property type="protein sequence ID" value="AAK47321.1"/>
    <property type="molecule type" value="Genomic_DNA"/>
</dbReference>
<dbReference type="PIR" id="D70748">
    <property type="entry name" value="D70748"/>
</dbReference>
<dbReference type="RefSeq" id="WP_003414814.1">
    <property type="nucleotide sequence ID" value="NZ_KK341227.1"/>
</dbReference>
<dbReference type="SMR" id="P9WNC2"/>
<dbReference type="GeneID" id="45426912"/>
<dbReference type="KEGG" id="mtc:MT2994"/>
<dbReference type="PATRIC" id="fig|83331.31.peg.3234"/>
<dbReference type="HOGENOM" id="CLU_038423_1_2_11"/>
<dbReference type="Proteomes" id="UP000001020">
    <property type="component" value="Chromosome"/>
</dbReference>
<dbReference type="GO" id="GO:0034039">
    <property type="term" value="F:8-oxo-7,8-dihydroguanine DNA N-glycosylase activity"/>
    <property type="evidence" value="ECO:0007669"/>
    <property type="project" value="TreeGrafter"/>
</dbReference>
<dbReference type="GO" id="GO:0140078">
    <property type="term" value="F:class I DNA-(apurinic or apyrimidinic site) endonuclease activity"/>
    <property type="evidence" value="ECO:0007669"/>
    <property type="project" value="UniProtKB-EC"/>
</dbReference>
<dbReference type="GO" id="GO:0003684">
    <property type="term" value="F:damaged DNA binding"/>
    <property type="evidence" value="ECO:0007669"/>
    <property type="project" value="InterPro"/>
</dbReference>
<dbReference type="GO" id="GO:0008270">
    <property type="term" value="F:zinc ion binding"/>
    <property type="evidence" value="ECO:0007669"/>
    <property type="project" value="UniProtKB-UniRule"/>
</dbReference>
<dbReference type="GO" id="GO:0006284">
    <property type="term" value="P:base-excision repair"/>
    <property type="evidence" value="ECO:0007669"/>
    <property type="project" value="InterPro"/>
</dbReference>
<dbReference type="CDD" id="cd08966">
    <property type="entry name" value="EcFpg-like_N"/>
    <property type="match status" value="1"/>
</dbReference>
<dbReference type="FunFam" id="1.10.8.50:FF:000003">
    <property type="entry name" value="Formamidopyrimidine-DNA glycosylase"/>
    <property type="match status" value="1"/>
</dbReference>
<dbReference type="FunFam" id="3.20.190.10:FF:000006">
    <property type="entry name" value="Formamidopyrimidine-DNA glycosylase"/>
    <property type="match status" value="1"/>
</dbReference>
<dbReference type="Gene3D" id="1.10.8.50">
    <property type="match status" value="1"/>
</dbReference>
<dbReference type="Gene3D" id="3.20.190.10">
    <property type="entry name" value="MutM-like, N-terminal"/>
    <property type="match status" value="1"/>
</dbReference>
<dbReference type="HAMAP" id="MF_00103">
    <property type="entry name" value="Fapy_DNA_glycosyl"/>
    <property type="match status" value="1"/>
</dbReference>
<dbReference type="InterPro" id="IPR015886">
    <property type="entry name" value="DNA_glyclase/AP_lyase_DNA-bd"/>
</dbReference>
<dbReference type="InterPro" id="IPR015887">
    <property type="entry name" value="DNA_glyclase_Znf_dom_DNA_BS"/>
</dbReference>
<dbReference type="InterPro" id="IPR020629">
    <property type="entry name" value="Formamido-pyr_DNA_Glyclase"/>
</dbReference>
<dbReference type="InterPro" id="IPR012319">
    <property type="entry name" value="FPG_cat"/>
</dbReference>
<dbReference type="InterPro" id="IPR035937">
    <property type="entry name" value="MutM-like_N-ter"/>
</dbReference>
<dbReference type="InterPro" id="IPR010979">
    <property type="entry name" value="Ribosomal_uS13-like_H2TH"/>
</dbReference>
<dbReference type="InterPro" id="IPR000214">
    <property type="entry name" value="Znf_DNA_glyclase/AP_lyase"/>
</dbReference>
<dbReference type="InterPro" id="IPR010663">
    <property type="entry name" value="Znf_FPG/IleRS"/>
</dbReference>
<dbReference type="NCBIfam" id="TIGR00577">
    <property type="entry name" value="fpg"/>
    <property type="match status" value="1"/>
</dbReference>
<dbReference type="NCBIfam" id="NF002211">
    <property type="entry name" value="PRK01103.1"/>
    <property type="match status" value="1"/>
</dbReference>
<dbReference type="PANTHER" id="PTHR22993">
    <property type="entry name" value="FORMAMIDOPYRIMIDINE-DNA GLYCOSYLASE"/>
    <property type="match status" value="1"/>
</dbReference>
<dbReference type="PANTHER" id="PTHR22993:SF9">
    <property type="entry name" value="FORMAMIDOPYRIMIDINE-DNA GLYCOSYLASE"/>
    <property type="match status" value="1"/>
</dbReference>
<dbReference type="Pfam" id="PF01149">
    <property type="entry name" value="Fapy_DNA_glyco"/>
    <property type="match status" value="1"/>
</dbReference>
<dbReference type="Pfam" id="PF06831">
    <property type="entry name" value="H2TH"/>
    <property type="match status" value="1"/>
</dbReference>
<dbReference type="Pfam" id="PF06827">
    <property type="entry name" value="zf-FPG_IleRS"/>
    <property type="match status" value="1"/>
</dbReference>
<dbReference type="SMART" id="SM00898">
    <property type="entry name" value="Fapy_DNA_glyco"/>
    <property type="match status" value="1"/>
</dbReference>
<dbReference type="SMART" id="SM01232">
    <property type="entry name" value="H2TH"/>
    <property type="match status" value="1"/>
</dbReference>
<dbReference type="SUPFAM" id="SSF57716">
    <property type="entry name" value="Glucocorticoid receptor-like (DNA-binding domain)"/>
    <property type="match status" value="1"/>
</dbReference>
<dbReference type="SUPFAM" id="SSF81624">
    <property type="entry name" value="N-terminal domain of MutM-like DNA repair proteins"/>
    <property type="match status" value="1"/>
</dbReference>
<dbReference type="SUPFAM" id="SSF46946">
    <property type="entry name" value="S13-like H2TH domain"/>
    <property type="match status" value="1"/>
</dbReference>
<dbReference type="PROSITE" id="PS51068">
    <property type="entry name" value="FPG_CAT"/>
    <property type="match status" value="1"/>
</dbReference>
<dbReference type="PROSITE" id="PS01242">
    <property type="entry name" value="ZF_FPG_1"/>
    <property type="match status" value="1"/>
</dbReference>
<dbReference type="PROSITE" id="PS51066">
    <property type="entry name" value="ZF_FPG_2"/>
    <property type="match status" value="1"/>
</dbReference>
<protein>
    <recommendedName>
        <fullName>Formamidopyrimidine-DNA glycosylase 1</fullName>
        <shortName>Fapy-DNA glycosylase 1</shortName>
        <ecNumber>3.2.2.23</ecNumber>
    </recommendedName>
    <alternativeName>
        <fullName>DNA-(apurinic or apyrimidinic site) lyase MutM 1</fullName>
        <shortName>AP lyase MutM 1</shortName>
        <ecNumber>4.2.99.18</ecNumber>
    </alternativeName>
</protein>
<organism>
    <name type="scientific">Mycobacterium tuberculosis (strain CDC 1551 / Oshkosh)</name>
    <dbReference type="NCBI Taxonomy" id="83331"/>
    <lineage>
        <taxon>Bacteria</taxon>
        <taxon>Bacillati</taxon>
        <taxon>Actinomycetota</taxon>
        <taxon>Actinomycetes</taxon>
        <taxon>Mycobacteriales</taxon>
        <taxon>Mycobacteriaceae</taxon>
        <taxon>Mycobacterium</taxon>
        <taxon>Mycobacterium tuberculosis complex</taxon>
    </lineage>
</organism>
<feature type="initiator methionine" description="Removed" evidence="1">
    <location>
        <position position="1"/>
    </location>
</feature>
<feature type="chain" id="PRO_0000427152" description="Formamidopyrimidine-DNA glycosylase 1">
    <location>
        <begin position="2"/>
        <end position="289"/>
    </location>
</feature>
<feature type="zinc finger region" description="FPG-type">
    <location>
        <begin position="251"/>
        <end position="285"/>
    </location>
</feature>
<feature type="active site" description="Schiff-base intermediate with DNA" evidence="1">
    <location>
        <position position="2"/>
    </location>
</feature>
<feature type="active site" description="Proton donor" evidence="1">
    <location>
        <position position="3"/>
    </location>
</feature>
<feature type="active site" description="Proton donor; for beta-elimination activity" evidence="1">
    <location>
        <position position="61"/>
    </location>
</feature>
<feature type="active site" description="Proton donor; for delta-elimination activity" evidence="1">
    <location>
        <position position="275"/>
    </location>
</feature>
<feature type="binding site" evidence="1">
    <location>
        <position position="100"/>
    </location>
    <ligand>
        <name>DNA</name>
        <dbReference type="ChEBI" id="CHEBI:16991"/>
    </ligand>
</feature>
<feature type="binding site" evidence="1">
    <location>
        <position position="119"/>
    </location>
    <ligand>
        <name>DNA</name>
        <dbReference type="ChEBI" id="CHEBI:16991"/>
    </ligand>
</feature>
<feature type="binding site" evidence="1">
    <location>
        <position position="165"/>
    </location>
    <ligand>
        <name>DNA</name>
        <dbReference type="ChEBI" id="CHEBI:16991"/>
    </ligand>
</feature>